<feature type="chain" id="PRO_0000123289" description="Small ribosomal subunit protein uS11c">
    <location>
        <begin position="1"/>
        <end position="130"/>
    </location>
</feature>
<organism>
    <name type="scientific">Anthoceros angustus</name>
    <name type="common">Hornwort</name>
    <name type="synonym">Anthoceros formosae</name>
    <dbReference type="NCBI Taxonomy" id="48387"/>
    <lineage>
        <taxon>Eukaryota</taxon>
        <taxon>Viridiplantae</taxon>
        <taxon>Streptophyta</taxon>
        <taxon>Embryophyta</taxon>
        <taxon>Anthocerotophyta</taxon>
        <taxon>Anthocerotopsida</taxon>
        <taxon>Anthocerotidae</taxon>
        <taxon>Anthocerotales</taxon>
        <taxon>Anthocerotaceae</taxon>
        <taxon>Anthoceros</taxon>
    </lineage>
</organism>
<gene>
    <name evidence="1" type="primary">rps11</name>
</gene>
<accession>P59381</accession>
<name>RR11_ANTAG</name>
<proteinExistence type="evidence at transcript level"/>
<protein>
    <recommendedName>
        <fullName evidence="1">Small ribosomal subunit protein uS11c</fullName>
    </recommendedName>
    <alternativeName>
        <fullName evidence="4">30S ribosomal protein S11, chloroplastic</fullName>
    </alternativeName>
</protein>
<reference key="1">
    <citation type="journal article" date="2003" name="Nucleic Acids Res.">
        <title>The complete nucleotide sequence of the hornwort (Anthoceros formosae) chloroplast genome: insight into the earliest land plants.</title>
        <authorList>
            <person name="Kugita M."/>
            <person name="Kaneko A."/>
            <person name="Yamamoto Y."/>
            <person name="Takeya Y."/>
            <person name="Matsumoto T."/>
            <person name="Yoshinaga K."/>
        </authorList>
    </citation>
    <scope>NUCLEOTIDE SEQUENCE [LARGE SCALE GENOMIC DNA]</scope>
    <scope>RNA EDITING</scope>
</reference>
<reference key="2">
    <citation type="journal article" date="2003" name="Nucleic Acids Res.">
        <title>RNA editing in hornwort chloroplasts makes more than half the genes functional.</title>
        <authorList>
            <person name="Kugita M."/>
            <person name="Yamamoto Y."/>
            <person name="Fujikawa T."/>
            <person name="Matsumoto T."/>
            <person name="Yoshinaga K."/>
        </authorList>
    </citation>
    <scope>NUCLEOTIDE SEQUENCE [MRNA]</scope>
    <scope>RNA EDITING</scope>
    <source>
        <tissue>Thallus</tissue>
    </source>
</reference>
<geneLocation type="chloroplast"/>
<keyword id="KW-0150">Chloroplast</keyword>
<keyword id="KW-0934">Plastid</keyword>
<keyword id="KW-0687">Ribonucleoprotein</keyword>
<keyword id="KW-0689">Ribosomal protein</keyword>
<keyword id="KW-0691">RNA editing</keyword>
<keyword id="KW-0694">RNA-binding</keyword>
<keyword id="KW-0699">rRNA-binding</keyword>
<evidence type="ECO:0000255" key="1">
    <source>
        <dbReference type="HAMAP-Rule" id="MF_01310"/>
    </source>
</evidence>
<evidence type="ECO:0000269" key="2">
    <source>
    </source>
</evidence>
<evidence type="ECO:0000269" key="3">
    <source>
    </source>
</evidence>
<evidence type="ECO:0000305" key="4"/>
<comment type="subunit">
    <text evidence="1">Part of the 30S ribosomal subunit.</text>
</comment>
<comment type="subcellular location">
    <subcellularLocation>
        <location>Plastid</location>
        <location>Chloroplast</location>
    </subcellularLocation>
</comment>
<comment type="RNA editing">
    <location>
        <position position="23" evidence="2 3"/>
    </location>
    <location>
        <position position="29" evidence="2 3"/>
    </location>
    <location>
        <position position="46" evidence="2 3"/>
    </location>
    <location>
        <position position="82" evidence="2 3"/>
    </location>
    <text>The nonsense codons at positions 23 and 46 are modified to sense codons.</text>
</comment>
<comment type="similarity">
    <text evidence="1">Belongs to the universal ribosomal protein uS11 family.</text>
</comment>
<sequence>MAKSIRKINLRKGKRRIPRGVTHIQASFNNTIITVTDVRGQVVSWSSAGACGFKGTKKSTPFAAQTAAENAIRILIDQGMKQAEVMISGPGPGRDTALRAIRRSGVVLSYVRDVTPIPHNGCRPPKKRRV</sequence>
<dbReference type="EMBL" id="AB086179">
    <property type="protein sequence ID" value="BAC55382.1"/>
    <property type="molecule type" value="Genomic_DNA"/>
</dbReference>
<dbReference type="EMBL" id="AB087467">
    <property type="protein sequence ID" value="BAC55479.1"/>
    <property type="molecule type" value="mRNA"/>
</dbReference>
<dbReference type="RefSeq" id="NP_777446.1">
    <property type="nucleotide sequence ID" value="NC_004543.1"/>
</dbReference>
<dbReference type="SMR" id="P59381"/>
<dbReference type="GeneID" id="2553426"/>
<dbReference type="GO" id="GO:0009507">
    <property type="term" value="C:chloroplast"/>
    <property type="evidence" value="ECO:0007669"/>
    <property type="project" value="UniProtKB-SubCell"/>
</dbReference>
<dbReference type="GO" id="GO:1990904">
    <property type="term" value="C:ribonucleoprotein complex"/>
    <property type="evidence" value="ECO:0007669"/>
    <property type="project" value="UniProtKB-KW"/>
</dbReference>
<dbReference type="GO" id="GO:0005840">
    <property type="term" value="C:ribosome"/>
    <property type="evidence" value="ECO:0007669"/>
    <property type="project" value="UniProtKB-KW"/>
</dbReference>
<dbReference type="GO" id="GO:0019843">
    <property type="term" value="F:rRNA binding"/>
    <property type="evidence" value="ECO:0007669"/>
    <property type="project" value="UniProtKB-UniRule"/>
</dbReference>
<dbReference type="GO" id="GO:0003735">
    <property type="term" value="F:structural constituent of ribosome"/>
    <property type="evidence" value="ECO:0007669"/>
    <property type="project" value="InterPro"/>
</dbReference>
<dbReference type="GO" id="GO:0006412">
    <property type="term" value="P:translation"/>
    <property type="evidence" value="ECO:0007669"/>
    <property type="project" value="UniProtKB-UniRule"/>
</dbReference>
<dbReference type="FunFam" id="3.30.420.80:FF:000003">
    <property type="entry name" value="30S ribosomal protein S11, chloroplastic"/>
    <property type="match status" value="1"/>
</dbReference>
<dbReference type="Gene3D" id="3.30.420.80">
    <property type="entry name" value="Ribosomal protein S11"/>
    <property type="match status" value="1"/>
</dbReference>
<dbReference type="HAMAP" id="MF_01310">
    <property type="entry name" value="Ribosomal_uS11"/>
    <property type="match status" value="1"/>
</dbReference>
<dbReference type="InterPro" id="IPR001971">
    <property type="entry name" value="Ribosomal_uS11"/>
</dbReference>
<dbReference type="InterPro" id="IPR019981">
    <property type="entry name" value="Ribosomal_uS11_bac-type"/>
</dbReference>
<dbReference type="InterPro" id="IPR018102">
    <property type="entry name" value="Ribosomal_uS11_CS"/>
</dbReference>
<dbReference type="InterPro" id="IPR036967">
    <property type="entry name" value="Ribosomal_uS11_sf"/>
</dbReference>
<dbReference type="NCBIfam" id="NF003698">
    <property type="entry name" value="PRK05309.1"/>
    <property type="match status" value="1"/>
</dbReference>
<dbReference type="NCBIfam" id="TIGR03632">
    <property type="entry name" value="uS11_bact"/>
    <property type="match status" value="1"/>
</dbReference>
<dbReference type="PANTHER" id="PTHR11759">
    <property type="entry name" value="40S RIBOSOMAL PROTEIN S14/30S RIBOSOMAL PROTEIN S11"/>
    <property type="match status" value="1"/>
</dbReference>
<dbReference type="Pfam" id="PF00411">
    <property type="entry name" value="Ribosomal_S11"/>
    <property type="match status" value="1"/>
</dbReference>
<dbReference type="PIRSF" id="PIRSF002131">
    <property type="entry name" value="Ribosomal_S11"/>
    <property type="match status" value="1"/>
</dbReference>
<dbReference type="SUPFAM" id="SSF53137">
    <property type="entry name" value="Translational machinery components"/>
    <property type="match status" value="1"/>
</dbReference>
<dbReference type="PROSITE" id="PS00054">
    <property type="entry name" value="RIBOSOMAL_S11"/>
    <property type="match status" value="1"/>
</dbReference>